<reference key="1">
    <citation type="journal article" date="2002" name="Proc. Natl. Acad. Sci. U.S.A.">
        <title>The complete genome of hyperthermophile Methanopyrus kandleri AV19 and monophyly of archaeal methanogens.</title>
        <authorList>
            <person name="Slesarev A.I."/>
            <person name="Mezhevaya K.V."/>
            <person name="Makarova K.S."/>
            <person name="Polushin N.N."/>
            <person name="Shcherbinina O.V."/>
            <person name="Shakhova V.V."/>
            <person name="Belova G.I."/>
            <person name="Aravind L."/>
            <person name="Natale D.A."/>
            <person name="Rogozin I.B."/>
            <person name="Tatusov R.L."/>
            <person name="Wolf Y.I."/>
            <person name="Stetter K.O."/>
            <person name="Malykh A.G."/>
            <person name="Koonin E.V."/>
            <person name="Kozyavkin S.A."/>
        </authorList>
    </citation>
    <scope>NUCLEOTIDE SEQUENCE [LARGE SCALE GENOMIC DNA]</scope>
    <source>
        <strain>AV19 / DSM 6324 / JCM 9639 / NBRC 100938</strain>
    </source>
</reference>
<dbReference type="EC" id="2.4.2.17" evidence="1"/>
<dbReference type="EMBL" id="AE009439">
    <property type="protein sequence ID" value="AAM01580.1"/>
    <property type="molecule type" value="Genomic_DNA"/>
</dbReference>
<dbReference type="SMR" id="Q8TYD5"/>
<dbReference type="FunCoup" id="Q8TYD5">
    <property type="interactions" value="151"/>
</dbReference>
<dbReference type="STRING" id="190192.MK0365"/>
<dbReference type="PaxDb" id="190192-MK0365"/>
<dbReference type="EnsemblBacteria" id="AAM01580">
    <property type="protein sequence ID" value="AAM01580"/>
    <property type="gene ID" value="MK0365"/>
</dbReference>
<dbReference type="KEGG" id="mka:MK0365"/>
<dbReference type="PATRIC" id="fig|190192.8.peg.387"/>
<dbReference type="HOGENOM" id="CLU_038115_1_1_2"/>
<dbReference type="InParanoid" id="Q8TYD5"/>
<dbReference type="UniPathway" id="UPA00031">
    <property type="reaction ID" value="UER00006"/>
</dbReference>
<dbReference type="Proteomes" id="UP000001826">
    <property type="component" value="Chromosome"/>
</dbReference>
<dbReference type="GO" id="GO:0005737">
    <property type="term" value="C:cytoplasm"/>
    <property type="evidence" value="ECO:0007669"/>
    <property type="project" value="UniProtKB-SubCell"/>
</dbReference>
<dbReference type="GO" id="GO:0005524">
    <property type="term" value="F:ATP binding"/>
    <property type="evidence" value="ECO:0007669"/>
    <property type="project" value="UniProtKB-KW"/>
</dbReference>
<dbReference type="GO" id="GO:0003879">
    <property type="term" value="F:ATP phosphoribosyltransferase activity"/>
    <property type="evidence" value="ECO:0007669"/>
    <property type="project" value="UniProtKB-UniRule"/>
</dbReference>
<dbReference type="GO" id="GO:0000287">
    <property type="term" value="F:magnesium ion binding"/>
    <property type="evidence" value="ECO:0007669"/>
    <property type="project" value="UniProtKB-UniRule"/>
</dbReference>
<dbReference type="GO" id="GO:0000105">
    <property type="term" value="P:L-histidine biosynthetic process"/>
    <property type="evidence" value="ECO:0007669"/>
    <property type="project" value="UniProtKB-UniRule"/>
</dbReference>
<dbReference type="CDD" id="cd13594">
    <property type="entry name" value="PBP2_HisGL4"/>
    <property type="match status" value="1"/>
</dbReference>
<dbReference type="FunFam" id="3.30.70.120:FF:000002">
    <property type="entry name" value="ATP phosphoribosyltransferase"/>
    <property type="match status" value="1"/>
</dbReference>
<dbReference type="FunFam" id="3.40.190.10:FF:000008">
    <property type="entry name" value="ATP phosphoribosyltransferase"/>
    <property type="match status" value="1"/>
</dbReference>
<dbReference type="Gene3D" id="3.30.70.120">
    <property type="match status" value="1"/>
</dbReference>
<dbReference type="Gene3D" id="3.40.190.10">
    <property type="entry name" value="Periplasmic binding protein-like II"/>
    <property type="match status" value="2"/>
</dbReference>
<dbReference type="HAMAP" id="MF_00079">
    <property type="entry name" value="HisG_Long"/>
    <property type="match status" value="1"/>
</dbReference>
<dbReference type="InterPro" id="IPR020621">
    <property type="entry name" value="ATP-PRT_HisG_long"/>
</dbReference>
<dbReference type="InterPro" id="IPR013820">
    <property type="entry name" value="ATP_PRibTrfase_cat"/>
</dbReference>
<dbReference type="InterPro" id="IPR018198">
    <property type="entry name" value="ATP_PRibTrfase_CS"/>
</dbReference>
<dbReference type="InterPro" id="IPR001348">
    <property type="entry name" value="ATP_PRibTrfase_HisG"/>
</dbReference>
<dbReference type="InterPro" id="IPR013115">
    <property type="entry name" value="HisG_C"/>
</dbReference>
<dbReference type="InterPro" id="IPR011322">
    <property type="entry name" value="N-reg_PII-like_a/b"/>
</dbReference>
<dbReference type="InterPro" id="IPR015867">
    <property type="entry name" value="N-reg_PII/ATP_PRibTrfase_C"/>
</dbReference>
<dbReference type="NCBIfam" id="TIGR00070">
    <property type="entry name" value="hisG"/>
    <property type="match status" value="1"/>
</dbReference>
<dbReference type="NCBIfam" id="TIGR03455">
    <property type="entry name" value="HisG_C-term"/>
    <property type="match status" value="1"/>
</dbReference>
<dbReference type="PANTHER" id="PTHR21403:SF10">
    <property type="entry name" value="ATP PHOSPHORIBOSYLTRANSFERASE"/>
    <property type="match status" value="1"/>
</dbReference>
<dbReference type="PANTHER" id="PTHR21403">
    <property type="entry name" value="ATP PHOSPHORIBOSYLTRANSFERASE ATP-PRTASE"/>
    <property type="match status" value="1"/>
</dbReference>
<dbReference type="Pfam" id="PF01634">
    <property type="entry name" value="HisG"/>
    <property type="match status" value="1"/>
</dbReference>
<dbReference type="Pfam" id="PF08029">
    <property type="entry name" value="HisG_C"/>
    <property type="match status" value="1"/>
</dbReference>
<dbReference type="SUPFAM" id="SSF54913">
    <property type="entry name" value="GlnB-like"/>
    <property type="match status" value="1"/>
</dbReference>
<dbReference type="SUPFAM" id="SSF53850">
    <property type="entry name" value="Periplasmic binding protein-like II"/>
    <property type="match status" value="1"/>
</dbReference>
<dbReference type="PROSITE" id="PS01316">
    <property type="entry name" value="ATP_P_PHORIBOSYLTR"/>
    <property type="match status" value="1"/>
</dbReference>
<evidence type="ECO:0000255" key="1">
    <source>
        <dbReference type="HAMAP-Rule" id="MF_00079"/>
    </source>
</evidence>
<gene>
    <name evidence="1" type="primary">hisG</name>
    <name type="ordered locus">MK0365</name>
</gene>
<sequence>MITVAVPNKGRLHEPALKLLERAGIGVEEPLGRRLKARTTDPDIEVMFVRAADIPRLVEEGVAQLGITGYDLIVEAGAEVKELLDLRFGRARLVLAVPEESDVKSPEDLDGGTVATEFPNIARQYFEDVGVDVEIIQVSGATEIMPRIGVADAIVDLCSTGTTLKVNRLRVVDELLETSARLIANPDATDGEVIRRVYLSLKGVLNADGKCLVMMNVPRERLEEFHELLPGVTGPTVSEIYGDEDMVEVYAVVNEEDVSEVVLRAKELGAEGIIVLPIERMIP</sequence>
<comment type="function">
    <text evidence="1">Catalyzes the condensation of ATP and 5-phosphoribose 1-diphosphate to form N'-(5'-phosphoribosyl)-ATP (PR-ATP). Has a crucial role in the pathway because the rate of histidine biosynthesis seems to be controlled primarily by regulation of HisG enzymatic activity.</text>
</comment>
<comment type="catalytic activity">
    <reaction evidence="1">
        <text>1-(5-phospho-beta-D-ribosyl)-ATP + diphosphate = 5-phospho-alpha-D-ribose 1-diphosphate + ATP</text>
        <dbReference type="Rhea" id="RHEA:18473"/>
        <dbReference type="ChEBI" id="CHEBI:30616"/>
        <dbReference type="ChEBI" id="CHEBI:33019"/>
        <dbReference type="ChEBI" id="CHEBI:58017"/>
        <dbReference type="ChEBI" id="CHEBI:73183"/>
        <dbReference type="EC" id="2.4.2.17"/>
    </reaction>
</comment>
<comment type="cofactor">
    <cofactor evidence="1">
        <name>Mg(2+)</name>
        <dbReference type="ChEBI" id="CHEBI:18420"/>
    </cofactor>
</comment>
<comment type="activity regulation">
    <text evidence="1">Feedback inhibited by histidine.</text>
</comment>
<comment type="pathway">
    <text evidence="1">Amino-acid biosynthesis; L-histidine biosynthesis; L-histidine from 5-phospho-alpha-D-ribose 1-diphosphate: step 1/9.</text>
</comment>
<comment type="subcellular location">
    <subcellularLocation>
        <location evidence="1">Cytoplasm</location>
    </subcellularLocation>
</comment>
<comment type="similarity">
    <text evidence="1">Belongs to the ATP phosphoribosyltransferase family. Long subfamily.</text>
</comment>
<keyword id="KW-0028">Amino-acid biosynthesis</keyword>
<keyword id="KW-0067">ATP-binding</keyword>
<keyword id="KW-0963">Cytoplasm</keyword>
<keyword id="KW-0328">Glycosyltransferase</keyword>
<keyword id="KW-0368">Histidine biosynthesis</keyword>
<keyword id="KW-0460">Magnesium</keyword>
<keyword id="KW-0479">Metal-binding</keyword>
<keyword id="KW-0547">Nucleotide-binding</keyword>
<keyword id="KW-1185">Reference proteome</keyword>
<keyword id="KW-0808">Transferase</keyword>
<feature type="chain" id="PRO_0000151883" description="ATP phosphoribosyltransferase">
    <location>
        <begin position="1"/>
        <end position="283"/>
    </location>
</feature>
<proteinExistence type="inferred from homology"/>
<protein>
    <recommendedName>
        <fullName evidence="1">ATP phosphoribosyltransferase</fullName>
        <shortName evidence="1">ATP-PRT</shortName>
        <shortName evidence="1">ATP-PRTase</shortName>
        <ecNumber evidence="1">2.4.2.17</ecNumber>
    </recommendedName>
</protein>
<organism>
    <name type="scientific">Methanopyrus kandleri (strain AV19 / DSM 6324 / JCM 9639 / NBRC 100938)</name>
    <dbReference type="NCBI Taxonomy" id="190192"/>
    <lineage>
        <taxon>Archaea</taxon>
        <taxon>Methanobacteriati</taxon>
        <taxon>Methanobacteriota</taxon>
        <taxon>Methanomada group</taxon>
        <taxon>Methanopyri</taxon>
        <taxon>Methanopyrales</taxon>
        <taxon>Methanopyraceae</taxon>
        <taxon>Methanopyrus</taxon>
    </lineage>
</organism>
<accession>Q8TYD5</accession>
<name>HIS1_METKA</name>